<dbReference type="EMBL" id="AY073230">
    <property type="protein sequence ID" value="AAL60893.1"/>
    <property type="molecule type" value="Genomic_DNA"/>
</dbReference>
<dbReference type="EMBL" id="AY317937">
    <property type="protein sequence ID" value="AAP71262.1"/>
    <property type="molecule type" value="Genomic_DNA"/>
</dbReference>
<dbReference type="EMBL" id="U28774">
    <property type="protein sequence ID" value="AAC52397.1"/>
    <property type="molecule type" value="Genomic_DNA"/>
</dbReference>
<dbReference type="CCDS" id="CCDS24302.1"/>
<dbReference type="RefSeq" id="NP_667072.1">
    <property type="nucleotide sequence ID" value="NM_146861.2"/>
</dbReference>
<dbReference type="SMR" id="Q60885"/>
<dbReference type="FunCoup" id="Q60885">
    <property type="interactions" value="1155"/>
</dbReference>
<dbReference type="STRING" id="10090.ENSMUSP00000089622"/>
<dbReference type="GlyCosmos" id="Q60885">
    <property type="glycosylation" value="1 site, No reported glycans"/>
</dbReference>
<dbReference type="GlyGen" id="Q60885">
    <property type="glycosylation" value="1 site"/>
</dbReference>
<dbReference type="PaxDb" id="10090-ENSMUSP00000089622"/>
<dbReference type="Ensembl" id="ENSMUST00000091996.4">
    <property type="protein sequence ID" value="ENSMUSP00000089622.3"/>
    <property type="gene ID" value="ENSMUSG00000069430.4"/>
</dbReference>
<dbReference type="GeneID" id="18373"/>
<dbReference type="KEGG" id="mmu:18373"/>
<dbReference type="UCSC" id="uc007hpf.1">
    <property type="organism name" value="mouse"/>
</dbReference>
<dbReference type="AGR" id="MGI:107600"/>
<dbReference type="CTD" id="18373"/>
<dbReference type="MGI" id="MGI:107600">
    <property type="gene designation" value="Or10p22"/>
</dbReference>
<dbReference type="VEuPathDB" id="HostDB:ENSMUSG00000069430"/>
<dbReference type="eggNOG" id="ENOG502SIWR">
    <property type="taxonomic scope" value="Eukaryota"/>
</dbReference>
<dbReference type="GeneTree" id="ENSGT01120000271813"/>
<dbReference type="HOGENOM" id="CLU_012526_1_0_1"/>
<dbReference type="InParanoid" id="Q60885"/>
<dbReference type="OMA" id="ANANQDM"/>
<dbReference type="OrthoDB" id="9975554at2759"/>
<dbReference type="PhylomeDB" id="Q60885"/>
<dbReference type="TreeFam" id="TF337350"/>
<dbReference type="BioGRID-ORCS" id="18373">
    <property type="hits" value="2 hits in 67 CRISPR screens"/>
</dbReference>
<dbReference type="PRO" id="PR:Q60885"/>
<dbReference type="Proteomes" id="UP000000589">
    <property type="component" value="Chromosome 10"/>
</dbReference>
<dbReference type="RNAct" id="Q60885">
    <property type="molecule type" value="protein"/>
</dbReference>
<dbReference type="ExpressionAtlas" id="Q60885">
    <property type="expression patterns" value="baseline and differential"/>
</dbReference>
<dbReference type="GO" id="GO:0016020">
    <property type="term" value="C:membrane"/>
    <property type="evidence" value="ECO:0000247"/>
    <property type="project" value="MGI"/>
</dbReference>
<dbReference type="GO" id="GO:0005886">
    <property type="term" value="C:plasma membrane"/>
    <property type="evidence" value="ECO:0007669"/>
    <property type="project" value="UniProtKB-SubCell"/>
</dbReference>
<dbReference type="GO" id="GO:0004930">
    <property type="term" value="F:G protein-coupled receptor activity"/>
    <property type="evidence" value="ECO:0007669"/>
    <property type="project" value="UniProtKB-KW"/>
</dbReference>
<dbReference type="GO" id="GO:0004984">
    <property type="term" value="F:olfactory receptor activity"/>
    <property type="evidence" value="ECO:0000247"/>
    <property type="project" value="MGI"/>
</dbReference>
<dbReference type="GO" id="GO:0007186">
    <property type="term" value="P:G protein-coupled receptor signaling pathway"/>
    <property type="evidence" value="ECO:0000247"/>
    <property type="project" value="MGI"/>
</dbReference>
<dbReference type="GO" id="GO:0007608">
    <property type="term" value="P:sensory perception of smell"/>
    <property type="evidence" value="ECO:0000247"/>
    <property type="project" value="MGI"/>
</dbReference>
<dbReference type="CDD" id="cd15225">
    <property type="entry name" value="7tmA_OR10A-like"/>
    <property type="match status" value="1"/>
</dbReference>
<dbReference type="FunFam" id="1.20.1070.10:FF:000010">
    <property type="entry name" value="Olfactory receptor"/>
    <property type="match status" value="1"/>
</dbReference>
<dbReference type="Gene3D" id="1.20.1070.10">
    <property type="entry name" value="Rhodopsin 7-helix transmembrane proteins"/>
    <property type="match status" value="1"/>
</dbReference>
<dbReference type="InterPro" id="IPR000276">
    <property type="entry name" value="GPCR_Rhodpsn"/>
</dbReference>
<dbReference type="InterPro" id="IPR017452">
    <property type="entry name" value="GPCR_Rhodpsn_7TM"/>
</dbReference>
<dbReference type="InterPro" id="IPR000725">
    <property type="entry name" value="Olfact_rcpt"/>
</dbReference>
<dbReference type="PANTHER" id="PTHR26453">
    <property type="entry name" value="OLFACTORY RECEPTOR"/>
    <property type="match status" value="1"/>
</dbReference>
<dbReference type="Pfam" id="PF13853">
    <property type="entry name" value="7tm_4"/>
    <property type="match status" value="1"/>
</dbReference>
<dbReference type="PRINTS" id="PR00237">
    <property type="entry name" value="GPCRRHODOPSN"/>
</dbReference>
<dbReference type="PRINTS" id="PR00245">
    <property type="entry name" value="OLFACTORYR"/>
</dbReference>
<dbReference type="SUPFAM" id="SSF81321">
    <property type="entry name" value="Family A G protein-coupled receptor-like"/>
    <property type="match status" value="1"/>
</dbReference>
<dbReference type="PROSITE" id="PS00237">
    <property type="entry name" value="G_PROTEIN_RECEP_F1_1"/>
    <property type="match status" value="1"/>
</dbReference>
<dbReference type="PROSITE" id="PS50262">
    <property type="entry name" value="G_PROTEIN_RECEP_F1_2"/>
    <property type="match status" value="1"/>
</dbReference>
<sequence length="312" mass="34611">MGDDNDTDITEFILLGFSGYGFLQGHLFWGVLCIYVVTLLGNSLIVLLTLADSALHSPMYFFLRHFSVVEILYTTTIVPRMLADLRSSCPTIPLASCFTQLYFFALFGIAECCLLTAMAYDRYAAICCPLHYTTLMSQGTYTGLVGASYLAGVISGTTHSIFIFTLPFRGAKTIHHFLCDILPVLRLATASTFWGEVGNLFVTITFIFVPFLLIVASYACILVTILGVATSQGRQKLFSTCSSHLFVVILFFGTATVAYMRPQADSFGNTDQILTLVYTVVTPMCNPFVYSLRNKEVTGAMRRLMKRYLWGP</sequence>
<keyword id="KW-1003">Cell membrane</keyword>
<keyword id="KW-0297">G-protein coupled receptor</keyword>
<keyword id="KW-0325">Glycoprotein</keyword>
<keyword id="KW-0472">Membrane</keyword>
<keyword id="KW-0552">Olfaction</keyword>
<keyword id="KW-0675">Receptor</keyword>
<keyword id="KW-1185">Reference proteome</keyword>
<keyword id="KW-0716">Sensory transduction</keyword>
<keyword id="KW-0807">Transducer</keyword>
<keyword id="KW-0812">Transmembrane</keyword>
<keyword id="KW-1133">Transmembrane helix</keyword>
<comment type="function">
    <text evidence="3">Odorant receptor.</text>
</comment>
<comment type="subcellular location">
    <subcellularLocation>
        <location evidence="3">Cell membrane</location>
        <topology evidence="1">Multi-pass membrane protein</topology>
    </subcellularLocation>
</comment>
<comment type="similarity">
    <text evidence="2">Belongs to the G-protein coupled receptor 1 family.</text>
</comment>
<organism>
    <name type="scientific">Mus musculus</name>
    <name type="common">Mouse</name>
    <dbReference type="NCBI Taxonomy" id="10090"/>
    <lineage>
        <taxon>Eukaryota</taxon>
        <taxon>Metazoa</taxon>
        <taxon>Chordata</taxon>
        <taxon>Craniata</taxon>
        <taxon>Vertebrata</taxon>
        <taxon>Euteleostomi</taxon>
        <taxon>Mammalia</taxon>
        <taxon>Eutheria</taxon>
        <taxon>Euarchontoglires</taxon>
        <taxon>Glires</taxon>
        <taxon>Rodentia</taxon>
        <taxon>Myomorpha</taxon>
        <taxon>Muroidea</taxon>
        <taxon>Muridae</taxon>
        <taxon>Murinae</taxon>
        <taxon>Mus</taxon>
        <taxon>Mus</taxon>
    </lineage>
</organism>
<reference key="1">
    <citation type="journal article" date="2002" name="Nat. Neurosci.">
        <title>The olfactory receptor gene superfamily of the mouse.</title>
        <authorList>
            <person name="Zhang X."/>
            <person name="Firestein S."/>
        </authorList>
    </citation>
    <scope>NUCLEOTIDE SEQUENCE [GENOMIC DNA]</scope>
</reference>
<reference key="2">
    <citation type="journal article" date="2002" name="Hum. Mol. Genet.">
        <title>Different evolutionary processes shaped the mouse and human olfactory receptor gene families.</title>
        <authorList>
            <person name="Young J.M."/>
            <person name="Friedman C."/>
            <person name="Williams E.M."/>
            <person name="Ross J.A."/>
            <person name="Tonnes-Priddy L."/>
            <person name="Trask B.J."/>
        </authorList>
    </citation>
    <scope>NUCLEOTIDE SEQUENCE [GENOMIC DNA]</scope>
</reference>
<reference key="3">
    <citation type="journal article" date="2002" name="Hum. Mol. Genet.">
        <authorList>
            <person name="Young J.M."/>
            <person name="Friedman C."/>
            <person name="Williams E.M."/>
            <person name="Ross J.A."/>
            <person name="Tonnes-Priddy L."/>
            <person name="Trask B.J."/>
        </authorList>
    </citation>
    <scope>ERRATUM OF PUBMED:11875048</scope>
</reference>
<reference key="4">
    <citation type="journal article" date="1996" name="Proc. Natl. Acad. Sci. U.S.A.">
        <title>The chromosomal distribution of mouse odorant receptor genes.</title>
        <authorList>
            <person name="Sullivan S.L."/>
            <person name="Adamson M.C."/>
            <person name="Ressler K.J."/>
            <person name="Kozak C.A."/>
            <person name="Buck L.B."/>
        </authorList>
    </citation>
    <scope>NUCLEOTIDE SEQUENCE [GENOMIC DNA] OF 128-239</scope>
    <source>
        <strain>C57BL/6J</strain>
    </source>
</reference>
<name>10P22_MOUSE</name>
<evidence type="ECO:0000255" key="1"/>
<evidence type="ECO:0000255" key="2">
    <source>
        <dbReference type="PROSITE-ProRule" id="PRU00521"/>
    </source>
</evidence>
<evidence type="ECO:0000305" key="3"/>
<evidence type="ECO:0000312" key="4">
    <source>
        <dbReference type="MGI" id="MGI:107600"/>
    </source>
</evidence>
<protein>
    <recommendedName>
        <fullName evidence="3">Olfactory receptor 10P22</fullName>
    </recommendedName>
    <alternativeName>
        <fullName>Odorant receptor M25</fullName>
    </alternativeName>
    <alternativeName>
        <fullName>Olfactory receptor 269-3</fullName>
    </alternativeName>
    <alternativeName>
        <fullName>Olfactory receptor 9</fullName>
    </alternativeName>
</protein>
<gene>
    <name evidence="4" type="primary">Or10p22</name>
    <name evidence="4" type="synonym">Mor269-3</name>
    <name evidence="4" type="synonym">Olfr9</name>
</gene>
<feature type="chain" id="PRO_0000150808" description="Olfactory receptor 10P22">
    <location>
        <begin position="1"/>
        <end position="312"/>
    </location>
</feature>
<feature type="topological domain" description="Extracellular" evidence="1">
    <location>
        <begin position="1"/>
        <end position="26"/>
    </location>
</feature>
<feature type="transmembrane region" description="Helical; Name=1" evidence="1">
    <location>
        <begin position="27"/>
        <end position="47"/>
    </location>
</feature>
<feature type="topological domain" description="Cytoplasmic" evidence="1">
    <location>
        <begin position="48"/>
        <end position="57"/>
    </location>
</feature>
<feature type="transmembrane region" description="Helical; Name=2" evidence="1">
    <location>
        <begin position="58"/>
        <end position="78"/>
    </location>
</feature>
<feature type="topological domain" description="Extracellular" evidence="1">
    <location>
        <begin position="79"/>
        <end position="89"/>
    </location>
</feature>
<feature type="transmembrane region" description="Helical; Name=3" evidence="1">
    <location>
        <begin position="90"/>
        <end position="110"/>
    </location>
</feature>
<feature type="topological domain" description="Cytoplasmic" evidence="1">
    <location>
        <begin position="111"/>
        <end position="143"/>
    </location>
</feature>
<feature type="transmembrane region" description="Helical; Name=4" evidence="1">
    <location>
        <begin position="144"/>
        <end position="164"/>
    </location>
</feature>
<feature type="topological domain" description="Extracellular" evidence="1">
    <location>
        <begin position="165"/>
        <end position="205"/>
    </location>
</feature>
<feature type="transmembrane region" description="Helical; Name=5" evidence="1">
    <location>
        <begin position="206"/>
        <end position="226"/>
    </location>
</feature>
<feature type="topological domain" description="Cytoplasmic" evidence="1">
    <location>
        <begin position="227"/>
        <end position="236"/>
    </location>
</feature>
<feature type="transmembrane region" description="Helical; Name=6" evidence="1">
    <location>
        <begin position="237"/>
        <end position="257"/>
    </location>
</feature>
<feature type="topological domain" description="Extracellular" evidence="1">
    <location>
        <begin position="258"/>
        <end position="271"/>
    </location>
</feature>
<feature type="transmembrane region" description="Helical; Name=7" evidence="1">
    <location>
        <begin position="272"/>
        <end position="292"/>
    </location>
</feature>
<feature type="topological domain" description="Cytoplasmic" evidence="1">
    <location>
        <begin position="293"/>
        <end position="312"/>
    </location>
</feature>
<feature type="glycosylation site" description="N-linked (GlcNAc...) asparagine" evidence="1">
    <location>
        <position position="5"/>
    </location>
</feature>
<proteinExistence type="inferred from homology"/>
<accession>Q60885</accession>
<accession>Q8VGC0</accession>